<gene>
    <name type="primary">FAM228A</name>
</gene>
<proteinExistence type="evidence at transcript level"/>
<feature type="chain" id="PRO_0000348444" description="Protein FAM228A">
    <location>
        <begin position="1"/>
        <end position="318"/>
    </location>
</feature>
<feature type="region of interest" description="Disordered" evidence="1">
    <location>
        <begin position="259"/>
        <end position="297"/>
    </location>
</feature>
<name>F228A_BOVIN</name>
<reference key="1">
    <citation type="submission" date="2005-11" db="EMBL/GenBank/DDBJ databases">
        <authorList>
            <consortium name="NIH - Mammalian Gene Collection (MGC) project"/>
        </authorList>
    </citation>
    <scope>NUCLEOTIDE SEQUENCE [LARGE SCALE MRNA]</scope>
    <source>
        <strain>Crossbred X Angus</strain>
        <tissue>Liver</tissue>
    </source>
</reference>
<keyword id="KW-1185">Reference proteome</keyword>
<protein>
    <recommendedName>
        <fullName>Protein FAM228A</fullName>
    </recommendedName>
</protein>
<dbReference type="EMBL" id="BC109980">
    <property type="protein sequence ID" value="AAI09981.1"/>
    <property type="molecule type" value="mRNA"/>
</dbReference>
<dbReference type="RefSeq" id="NP_001070529.1">
    <property type="nucleotide sequence ID" value="NM_001077061.2"/>
</dbReference>
<dbReference type="FunCoup" id="Q32KQ1">
    <property type="interactions" value="15"/>
</dbReference>
<dbReference type="PaxDb" id="9913-ENSBTAP00000041217"/>
<dbReference type="GeneID" id="768001"/>
<dbReference type="KEGG" id="bta:768001"/>
<dbReference type="CTD" id="653140"/>
<dbReference type="VEuPathDB" id="HostDB:ENSBTAG00000000261"/>
<dbReference type="eggNOG" id="ENOG502RU0D">
    <property type="taxonomic scope" value="Eukaryota"/>
</dbReference>
<dbReference type="HOGENOM" id="CLU_079089_0_0_1"/>
<dbReference type="InParanoid" id="Q32KQ1"/>
<dbReference type="OMA" id="QHRPRSW"/>
<dbReference type="OrthoDB" id="9905773at2759"/>
<dbReference type="TreeFam" id="TF336288"/>
<dbReference type="Proteomes" id="UP000009136">
    <property type="component" value="Chromosome 11"/>
</dbReference>
<dbReference type="Bgee" id="ENSBTAG00000000261">
    <property type="expression patterns" value="Expressed in spermatocyte and 26 other cell types or tissues"/>
</dbReference>
<dbReference type="InterPro" id="IPR040046">
    <property type="entry name" value="FAM228"/>
</dbReference>
<dbReference type="PANTHER" id="PTHR28584">
    <property type="entry name" value="FAMILY WITH SEQUENCE SIMILARITY 228 MEMBER A"/>
    <property type="match status" value="1"/>
</dbReference>
<dbReference type="PANTHER" id="PTHR28584:SF2">
    <property type="entry name" value="PROTEIN FAM228A"/>
    <property type="match status" value="1"/>
</dbReference>
<organism>
    <name type="scientific">Bos taurus</name>
    <name type="common">Bovine</name>
    <dbReference type="NCBI Taxonomy" id="9913"/>
    <lineage>
        <taxon>Eukaryota</taxon>
        <taxon>Metazoa</taxon>
        <taxon>Chordata</taxon>
        <taxon>Craniata</taxon>
        <taxon>Vertebrata</taxon>
        <taxon>Euteleostomi</taxon>
        <taxon>Mammalia</taxon>
        <taxon>Eutheria</taxon>
        <taxon>Laurasiatheria</taxon>
        <taxon>Artiodactyla</taxon>
        <taxon>Ruminantia</taxon>
        <taxon>Pecora</taxon>
        <taxon>Bovidae</taxon>
        <taxon>Bovinae</taxon>
        <taxon>Bos</taxon>
    </lineage>
</organism>
<evidence type="ECO:0000256" key="1">
    <source>
        <dbReference type="SAM" id="MobiDB-lite"/>
    </source>
</evidence>
<evidence type="ECO:0000305" key="2"/>
<comment type="similarity">
    <text evidence="2">Belongs to the FAM228 family.</text>
</comment>
<accession>Q32KQ1</accession>
<sequence length="318" mass="37328">MSNCGKHFGPEQLEKWPELESVTLMEALAREDIDEAVYAILFRENCIAKRLDTYFQHLDAFKERKKELLHKKWTENVAKPLQQRIMEKVISYKALEKTKQENFEYFLKHTNKTEIIFGDFYDPEVYNPFYMTKKDPNYGKVAVPPFCDPLFIRQQEIDEEQRAVFQYTTGKRCTLKEFKELEKARQYARLPQFTFSLHSMVSKDRPKAFARPVGSKTHSKCSPEKLVCAEEKFPPYKVKMTSDVNQTVFERRFYSSKISQESKRHEKKGLALGTGQHRPRSWAAGEGQQRRRSQPVDRRVMTAEVLGQHLAALQLGDR</sequence>